<sequence length="76" mass="8793">MKMYRLGDVIIKVYENQQELESSKLEGCRSLCPNKMGKPVAVEIICPSCKPKEGEWLFCHFINQLNDFKLVMDKVV</sequence>
<keyword id="KW-1185">Reference proteome</keyword>
<organism>
    <name type="scientific">Acidianus bottle-shaped virus (isolate Italy/Pozzuoli)</name>
    <name type="common">ABV</name>
    <dbReference type="NCBI Taxonomy" id="654911"/>
    <lineage>
        <taxon>Viruses</taxon>
        <taxon>Viruses incertae sedis</taxon>
        <taxon>Ampullaviridae</taxon>
        <taxon>Bottigliavirus</taxon>
        <taxon>Bottigliavirus ABV</taxon>
    </lineage>
</organism>
<dbReference type="EMBL" id="EF432053">
    <property type="protein sequence ID" value="ABP73404.1"/>
    <property type="molecule type" value="Genomic_DNA"/>
</dbReference>
<dbReference type="RefSeq" id="YP_001210318.1">
    <property type="nucleotide sequence ID" value="NC_009452.1"/>
</dbReference>
<dbReference type="GeneID" id="5129856"/>
<dbReference type="KEGG" id="vg:5129856"/>
<dbReference type="Proteomes" id="UP000000513">
    <property type="component" value="Segment"/>
</dbReference>
<organismHost>
    <name type="scientific">Acidianus convivator</name>
    <dbReference type="NCBI Taxonomy" id="269667"/>
</organismHost>
<protein>
    <recommendedName>
        <fullName>Uncharacterized protein ORF76</fullName>
    </recommendedName>
</protein>
<proteinExistence type="predicted"/>
<accession>A4ZUA0</accession>
<gene>
    <name type="ORF">ORF76</name>
</gene>
<feature type="chain" id="PRO_0000384835" description="Uncharacterized protein ORF76">
    <location>
        <begin position="1"/>
        <end position="76"/>
    </location>
</feature>
<name>Y076_ABVP</name>
<reference key="1">
    <citation type="journal article" date="2007" name="Virology">
        <title>Genome of the Acidianus bottle-shaped virus and insights into the replication and packaging mechanisms.</title>
        <authorList>
            <person name="Peng X."/>
            <person name="Basta T."/>
            <person name="Haring M."/>
            <person name="Garrett R.A."/>
            <person name="Prangishvili D."/>
        </authorList>
    </citation>
    <scope>NUCLEOTIDE SEQUENCE [GENOMIC DNA]</scope>
</reference>